<feature type="chain" id="PRO_0000107344" description="Uncharacterized protein MJ1455">
    <location>
        <begin position="1"/>
        <end position="305"/>
    </location>
</feature>
<proteinExistence type="predicted"/>
<keyword id="KW-1185">Reference proteome</keyword>
<sequence>MILFEWGTYNALSTLKQAALLGTRITEIPPAVLSRRLPSGYYESYKKLGGEYFTSILAHGPYYSLSSEKGLKGHLSAIEKATLCGAEIYNYHLGKRVGDDLNYHLEVLKKFSEVNNEMIYSPEPATNIGEFGTLDELEELIKAAKEEDIKIIPSLQLENIFLNELGVYEKDDLDEAAEKADVDWWLKIFRRMDKISDYIMHFRFSQVIGLKYGKRFYKKRVPLGKGYPPVEPLTEALATYLVDNATRGGFKKVLFVYTGLPEVKYRDLIDLYAMIMKKSIDKLMSRESQVEYGDFYKVMSSEEEE</sequence>
<dbReference type="EMBL" id="L77117">
    <property type="protein sequence ID" value="AAB99469.1"/>
    <property type="molecule type" value="Genomic_DNA"/>
</dbReference>
<dbReference type="PIR" id="F64481">
    <property type="entry name" value="F64481"/>
</dbReference>
<dbReference type="RefSeq" id="WP_010870975.1">
    <property type="nucleotide sequence ID" value="NC_000909.1"/>
</dbReference>
<dbReference type="STRING" id="243232.MJ_1455"/>
<dbReference type="PaxDb" id="243232-MJ_1455"/>
<dbReference type="DNASU" id="1452359"/>
<dbReference type="EnsemblBacteria" id="AAB99469">
    <property type="protein sequence ID" value="AAB99469"/>
    <property type="gene ID" value="MJ_1455"/>
</dbReference>
<dbReference type="GeneID" id="1452359"/>
<dbReference type="KEGG" id="mja:MJ_1455"/>
<dbReference type="eggNOG" id="arCOG01894">
    <property type="taxonomic scope" value="Archaea"/>
</dbReference>
<dbReference type="HOGENOM" id="CLU_955177_0_0_2"/>
<dbReference type="InParanoid" id="Q58850"/>
<dbReference type="OrthoDB" id="64756at2157"/>
<dbReference type="Proteomes" id="UP000000805">
    <property type="component" value="Chromosome"/>
</dbReference>
<dbReference type="Gene3D" id="3.20.20.150">
    <property type="entry name" value="Divalent-metal-dependent TIM barrel enzymes"/>
    <property type="match status" value="1"/>
</dbReference>
<dbReference type="InterPro" id="IPR036237">
    <property type="entry name" value="Xyl_isomerase-like_sf"/>
</dbReference>
<dbReference type="SUPFAM" id="SSF51658">
    <property type="entry name" value="Xylose isomerase-like"/>
    <property type="match status" value="1"/>
</dbReference>
<gene>
    <name type="ordered locus">MJ1455</name>
</gene>
<protein>
    <recommendedName>
        <fullName>Uncharacterized protein MJ1455</fullName>
    </recommendedName>
</protein>
<accession>Q58850</accession>
<name>Y1455_METJA</name>
<organism>
    <name type="scientific">Methanocaldococcus jannaschii (strain ATCC 43067 / DSM 2661 / JAL-1 / JCM 10045 / NBRC 100440)</name>
    <name type="common">Methanococcus jannaschii</name>
    <dbReference type="NCBI Taxonomy" id="243232"/>
    <lineage>
        <taxon>Archaea</taxon>
        <taxon>Methanobacteriati</taxon>
        <taxon>Methanobacteriota</taxon>
        <taxon>Methanomada group</taxon>
        <taxon>Methanococci</taxon>
        <taxon>Methanococcales</taxon>
        <taxon>Methanocaldococcaceae</taxon>
        <taxon>Methanocaldococcus</taxon>
    </lineage>
</organism>
<reference key="1">
    <citation type="journal article" date="1996" name="Science">
        <title>Complete genome sequence of the methanogenic archaeon, Methanococcus jannaschii.</title>
        <authorList>
            <person name="Bult C.J."/>
            <person name="White O."/>
            <person name="Olsen G.J."/>
            <person name="Zhou L."/>
            <person name="Fleischmann R.D."/>
            <person name="Sutton G.G."/>
            <person name="Blake J.A."/>
            <person name="FitzGerald L.M."/>
            <person name="Clayton R.A."/>
            <person name="Gocayne J.D."/>
            <person name="Kerlavage A.R."/>
            <person name="Dougherty B.A."/>
            <person name="Tomb J.-F."/>
            <person name="Adams M.D."/>
            <person name="Reich C.I."/>
            <person name="Overbeek R."/>
            <person name="Kirkness E.F."/>
            <person name="Weinstock K.G."/>
            <person name="Merrick J.M."/>
            <person name="Glodek A."/>
            <person name="Scott J.L."/>
            <person name="Geoghagen N.S.M."/>
            <person name="Weidman J.F."/>
            <person name="Fuhrmann J.L."/>
            <person name="Nguyen D."/>
            <person name="Utterback T.R."/>
            <person name="Kelley J.M."/>
            <person name="Peterson J.D."/>
            <person name="Sadow P.W."/>
            <person name="Hanna M.C."/>
            <person name="Cotton M.D."/>
            <person name="Roberts K.M."/>
            <person name="Hurst M.A."/>
            <person name="Kaine B.P."/>
            <person name="Borodovsky M."/>
            <person name="Klenk H.-P."/>
            <person name="Fraser C.M."/>
            <person name="Smith H.O."/>
            <person name="Woese C.R."/>
            <person name="Venter J.C."/>
        </authorList>
    </citation>
    <scope>NUCLEOTIDE SEQUENCE [LARGE SCALE GENOMIC DNA]</scope>
    <source>
        <strain>ATCC 43067 / DSM 2661 / JAL-1 / JCM 10045 / NBRC 100440</strain>
    </source>
</reference>